<organism>
    <name type="scientific">Pseudomonas fluorescens (strain Pf0-1)</name>
    <dbReference type="NCBI Taxonomy" id="205922"/>
    <lineage>
        <taxon>Bacteria</taxon>
        <taxon>Pseudomonadati</taxon>
        <taxon>Pseudomonadota</taxon>
        <taxon>Gammaproteobacteria</taxon>
        <taxon>Pseudomonadales</taxon>
        <taxon>Pseudomonadaceae</taxon>
        <taxon>Pseudomonas</taxon>
    </lineage>
</organism>
<reference key="1">
    <citation type="journal article" date="2009" name="Genome Biol.">
        <title>Genomic and genetic analyses of diversity and plant interactions of Pseudomonas fluorescens.</title>
        <authorList>
            <person name="Silby M.W."/>
            <person name="Cerdeno-Tarraga A.M."/>
            <person name="Vernikos G.S."/>
            <person name="Giddens S.R."/>
            <person name="Jackson R.W."/>
            <person name="Preston G.M."/>
            <person name="Zhang X.-X."/>
            <person name="Moon C.D."/>
            <person name="Gehrig S.M."/>
            <person name="Godfrey S.A.C."/>
            <person name="Knight C.G."/>
            <person name="Malone J.G."/>
            <person name="Robinson Z."/>
            <person name="Spiers A.J."/>
            <person name="Harris S."/>
            <person name="Challis G.L."/>
            <person name="Yaxley A.M."/>
            <person name="Harris D."/>
            <person name="Seeger K."/>
            <person name="Murphy L."/>
            <person name="Rutter S."/>
            <person name="Squares R."/>
            <person name="Quail M.A."/>
            <person name="Saunders E."/>
            <person name="Mavromatis K."/>
            <person name="Brettin T.S."/>
            <person name="Bentley S.D."/>
            <person name="Hothersall J."/>
            <person name="Stephens E."/>
            <person name="Thomas C.M."/>
            <person name="Parkhill J."/>
            <person name="Levy S.B."/>
            <person name="Rainey P.B."/>
            <person name="Thomson N.R."/>
        </authorList>
    </citation>
    <scope>NUCLEOTIDE SEQUENCE [LARGE SCALE GENOMIC DNA]</scope>
    <source>
        <strain>Pf0-1</strain>
    </source>
</reference>
<feature type="chain" id="PRO_0000291135" description="UPF0434 protein Pfl01_4174">
    <location>
        <begin position="1"/>
        <end position="61"/>
    </location>
</feature>
<accession>Q3K8J3</accession>
<sequence length="61" mass="6616">MDTKLLDILACPVCKGPLKLSADKTELISKGAGLAYPIRDGIPVMLESEARTLTTDERLDK</sequence>
<name>Y4174_PSEPF</name>
<comment type="similarity">
    <text evidence="1">Belongs to the UPF0434 family.</text>
</comment>
<gene>
    <name type="ordered locus">Pfl01_4174</name>
</gene>
<protein>
    <recommendedName>
        <fullName evidence="1">UPF0434 protein Pfl01_4174</fullName>
    </recommendedName>
</protein>
<dbReference type="EMBL" id="CP000094">
    <property type="protein sequence ID" value="ABA75911.1"/>
    <property type="molecule type" value="Genomic_DNA"/>
</dbReference>
<dbReference type="RefSeq" id="WP_003179363.1">
    <property type="nucleotide sequence ID" value="NC_007492.2"/>
</dbReference>
<dbReference type="SMR" id="Q3K8J3"/>
<dbReference type="KEGG" id="pfo:Pfl01_4174"/>
<dbReference type="eggNOG" id="COG2835">
    <property type="taxonomic scope" value="Bacteria"/>
</dbReference>
<dbReference type="HOGENOM" id="CLU_155659_3_1_6"/>
<dbReference type="Proteomes" id="UP000002704">
    <property type="component" value="Chromosome"/>
</dbReference>
<dbReference type="GO" id="GO:0005829">
    <property type="term" value="C:cytosol"/>
    <property type="evidence" value="ECO:0007669"/>
    <property type="project" value="TreeGrafter"/>
</dbReference>
<dbReference type="FunFam" id="2.20.25.10:FF:000002">
    <property type="entry name" value="UPF0434 protein YcaR"/>
    <property type="match status" value="1"/>
</dbReference>
<dbReference type="Gene3D" id="2.20.25.10">
    <property type="match status" value="1"/>
</dbReference>
<dbReference type="HAMAP" id="MF_01187">
    <property type="entry name" value="UPF0434"/>
    <property type="match status" value="1"/>
</dbReference>
<dbReference type="InterPro" id="IPR005651">
    <property type="entry name" value="Trm112-like"/>
</dbReference>
<dbReference type="PANTHER" id="PTHR33505:SF4">
    <property type="entry name" value="PROTEIN PREY, MITOCHONDRIAL"/>
    <property type="match status" value="1"/>
</dbReference>
<dbReference type="PANTHER" id="PTHR33505">
    <property type="entry name" value="ZGC:162634"/>
    <property type="match status" value="1"/>
</dbReference>
<dbReference type="Pfam" id="PF03966">
    <property type="entry name" value="Trm112p"/>
    <property type="match status" value="1"/>
</dbReference>
<dbReference type="SUPFAM" id="SSF158997">
    <property type="entry name" value="Trm112p-like"/>
    <property type="match status" value="1"/>
</dbReference>
<proteinExistence type="inferred from homology"/>
<evidence type="ECO:0000255" key="1">
    <source>
        <dbReference type="HAMAP-Rule" id="MF_01187"/>
    </source>
</evidence>